<reference key="1">
    <citation type="journal article" date="2004" name="Genome Res.">
        <title>The status, quality, and expansion of the NIH full-length cDNA project: the Mammalian Gene Collection (MGC).</title>
        <authorList>
            <consortium name="The MGC Project Team"/>
        </authorList>
    </citation>
    <scope>NUCLEOTIDE SEQUENCE [LARGE SCALE MRNA]</scope>
</reference>
<reference key="2">
    <citation type="journal article" date="2012" name="Nat. Commun.">
        <title>Quantitative maps of protein phosphorylation sites across 14 different rat organs and tissues.</title>
        <authorList>
            <person name="Lundby A."/>
            <person name="Secher A."/>
            <person name="Lage K."/>
            <person name="Nordsborg N.B."/>
            <person name="Dmytriyev A."/>
            <person name="Lundby C."/>
            <person name="Olsen J.V."/>
        </authorList>
    </citation>
    <scope>IDENTIFICATION BY MASS SPECTROMETRY [LARGE SCALE ANALYSIS]</scope>
</reference>
<comment type="function">
    <text evidence="1">Translation initiation factor that is able to deliver tRNA to the P-site of the eukaryotic ribosome in a GTP-independent manner. The binding of Met-tRNA(I) occurs after the AUG codon finds its position in the P-site of 40S ribosomes, the situation that takes place during initiation complex formation on some specific RNAs. Its activity in tRNA binding with 40S subunits does not require the presence of the aminoacyl moiety. Possesses the unique ability to deliver non-Met (elongator) tRNAs into the P-site of the 40S subunit. In addition to its role in initiation, can promote release of deacylated tRNA and mRNA from recycled 40S subunits following ABCE1-mediated dissociation of post-termination ribosomal complexes into subunits (By similarity).</text>
</comment>
<comment type="subcellular location">
    <subcellularLocation>
        <location evidence="1">Cytoplasm</location>
    </subcellularLocation>
</comment>
<comment type="similarity">
    <text evidence="8">Belongs to the eIF2D family.</text>
</comment>
<organism>
    <name type="scientific">Rattus norvegicus</name>
    <name type="common">Rat</name>
    <dbReference type="NCBI Taxonomy" id="10116"/>
    <lineage>
        <taxon>Eukaryota</taxon>
        <taxon>Metazoa</taxon>
        <taxon>Chordata</taxon>
        <taxon>Craniata</taxon>
        <taxon>Vertebrata</taxon>
        <taxon>Euteleostomi</taxon>
        <taxon>Mammalia</taxon>
        <taxon>Eutheria</taxon>
        <taxon>Euarchontoglires</taxon>
        <taxon>Glires</taxon>
        <taxon>Rodentia</taxon>
        <taxon>Myomorpha</taxon>
        <taxon>Muroidea</taxon>
        <taxon>Muridae</taxon>
        <taxon>Murinae</taxon>
        <taxon>Rattus</taxon>
    </lineage>
</organism>
<dbReference type="EMBL" id="BC087701">
    <property type="protein sequence ID" value="AAH87701.1"/>
    <property type="molecule type" value="mRNA"/>
</dbReference>
<dbReference type="RefSeq" id="NP_001017489.1">
    <property type="nucleotide sequence ID" value="NM_001017489.1"/>
</dbReference>
<dbReference type="RefSeq" id="XP_063128601.1">
    <property type="nucleotide sequence ID" value="XM_063272531.1"/>
</dbReference>
<dbReference type="SMR" id="Q5PPG7"/>
<dbReference type="FunCoup" id="Q5PPG7">
    <property type="interactions" value="2648"/>
</dbReference>
<dbReference type="STRING" id="10116.ENSRNOP00000006768"/>
<dbReference type="iPTMnet" id="Q5PPG7"/>
<dbReference type="PhosphoSitePlus" id="Q5PPG7"/>
<dbReference type="jPOST" id="Q5PPG7"/>
<dbReference type="PaxDb" id="10116-ENSRNOP00000006768"/>
<dbReference type="Ensembl" id="ENSRNOT00000006768.5">
    <property type="protein sequence ID" value="ENSRNOP00000006768.2"/>
    <property type="gene ID" value="ENSRNOG00000004910.7"/>
</dbReference>
<dbReference type="GeneID" id="498225"/>
<dbReference type="KEGG" id="rno:498225"/>
<dbReference type="UCSC" id="RGD:1561765">
    <property type="organism name" value="rat"/>
</dbReference>
<dbReference type="AGR" id="RGD:1561765"/>
<dbReference type="CTD" id="1939"/>
<dbReference type="RGD" id="1561765">
    <property type="gene designation" value="Eif2d"/>
</dbReference>
<dbReference type="eggNOG" id="KOG2522">
    <property type="taxonomic scope" value="Eukaryota"/>
</dbReference>
<dbReference type="GeneTree" id="ENSGT00550000074865"/>
<dbReference type="HOGENOM" id="CLU_012487_2_0_1"/>
<dbReference type="InParanoid" id="Q5PPG7"/>
<dbReference type="OMA" id="MFLKPYR"/>
<dbReference type="OrthoDB" id="199771at2759"/>
<dbReference type="PhylomeDB" id="Q5PPG7"/>
<dbReference type="TreeFam" id="TF105830"/>
<dbReference type="PRO" id="PR:Q5PPG7"/>
<dbReference type="Proteomes" id="UP000002494">
    <property type="component" value="Chromosome 13"/>
</dbReference>
<dbReference type="Bgee" id="ENSRNOG00000004910">
    <property type="expression patterns" value="Expressed in thymus and 20 other cell types or tissues"/>
</dbReference>
<dbReference type="GO" id="GO:0005737">
    <property type="term" value="C:cytoplasm"/>
    <property type="evidence" value="ECO:0000250"/>
    <property type="project" value="UniProtKB"/>
</dbReference>
<dbReference type="GO" id="GO:0003723">
    <property type="term" value="F:RNA binding"/>
    <property type="evidence" value="ECO:0007669"/>
    <property type="project" value="InterPro"/>
</dbReference>
<dbReference type="GO" id="GO:0003743">
    <property type="term" value="F:translation initiation factor activity"/>
    <property type="evidence" value="ECO:0000250"/>
    <property type="project" value="UniProtKB"/>
</dbReference>
<dbReference type="GO" id="GO:0001731">
    <property type="term" value="P:formation of translation preinitiation complex"/>
    <property type="evidence" value="ECO:0000266"/>
    <property type="project" value="RGD"/>
</dbReference>
<dbReference type="GO" id="GO:0075522">
    <property type="term" value="P:IRES-dependent viral translational initiation"/>
    <property type="evidence" value="ECO:0000266"/>
    <property type="project" value="RGD"/>
</dbReference>
<dbReference type="GO" id="GO:0032790">
    <property type="term" value="P:ribosome disassembly"/>
    <property type="evidence" value="ECO:0000266"/>
    <property type="project" value="RGD"/>
</dbReference>
<dbReference type="CDD" id="cd11608">
    <property type="entry name" value="eIF2D_C"/>
    <property type="match status" value="1"/>
</dbReference>
<dbReference type="CDD" id="cd11610">
    <property type="entry name" value="eIF2D_N"/>
    <property type="match status" value="1"/>
</dbReference>
<dbReference type="CDD" id="cd21156">
    <property type="entry name" value="PUA_eIF2d-like"/>
    <property type="match status" value="1"/>
</dbReference>
<dbReference type="FunFam" id="3.10.400.20:FF:000002">
    <property type="entry name" value="Eukaryotic translation initiation factor 2D"/>
    <property type="match status" value="1"/>
</dbReference>
<dbReference type="FunFam" id="3.30.780.10:FF:000007">
    <property type="entry name" value="Putative eukaryotic translation initiation factor 2d"/>
    <property type="match status" value="1"/>
</dbReference>
<dbReference type="Gene3D" id="3.10.400.20">
    <property type="match status" value="1"/>
</dbReference>
<dbReference type="Gene3D" id="3.30.780.10">
    <property type="entry name" value="SUI1-like domain"/>
    <property type="match status" value="1"/>
</dbReference>
<dbReference type="InterPro" id="IPR039757">
    <property type="entry name" value="EIF2D"/>
</dbReference>
<dbReference type="InterPro" id="IPR048247">
    <property type="entry name" value="eIF2D_N"/>
</dbReference>
<dbReference type="InterPro" id="IPR039759">
    <property type="entry name" value="eIF2D_SUI1"/>
</dbReference>
<dbReference type="InterPro" id="IPR041366">
    <property type="entry name" value="Pre-PUA"/>
</dbReference>
<dbReference type="InterPro" id="IPR002478">
    <property type="entry name" value="PUA"/>
</dbReference>
<dbReference type="InterPro" id="IPR015947">
    <property type="entry name" value="PUA-like_sf"/>
</dbReference>
<dbReference type="InterPro" id="IPR048248">
    <property type="entry name" value="PUA_eIF2d-like"/>
</dbReference>
<dbReference type="InterPro" id="IPR001950">
    <property type="entry name" value="SUI1"/>
</dbReference>
<dbReference type="InterPro" id="IPR036877">
    <property type="entry name" value="SUI1_dom_sf"/>
</dbReference>
<dbReference type="InterPro" id="IPR036885">
    <property type="entry name" value="SWIB_MDM2_dom_sf"/>
</dbReference>
<dbReference type="InterPro" id="IPR003121">
    <property type="entry name" value="SWIB_MDM2_domain"/>
</dbReference>
<dbReference type="PANTHER" id="PTHR12217">
    <property type="entry name" value="EUKARYOTIC TRANSLATION INITIATION FACTOR 2D"/>
    <property type="match status" value="1"/>
</dbReference>
<dbReference type="PANTHER" id="PTHR12217:SF4">
    <property type="entry name" value="EUKARYOTIC TRANSLATION INITIATION FACTOR 2D"/>
    <property type="match status" value="1"/>
</dbReference>
<dbReference type="Pfam" id="PF17832">
    <property type="entry name" value="Pre-PUA"/>
    <property type="match status" value="1"/>
</dbReference>
<dbReference type="Pfam" id="PF01253">
    <property type="entry name" value="SUI1"/>
    <property type="match status" value="1"/>
</dbReference>
<dbReference type="Pfam" id="PF25304">
    <property type="entry name" value="WH_eIF2D"/>
    <property type="match status" value="1"/>
</dbReference>
<dbReference type="SMART" id="SM00359">
    <property type="entry name" value="PUA"/>
    <property type="match status" value="1"/>
</dbReference>
<dbReference type="SUPFAM" id="SSF55159">
    <property type="entry name" value="eIF1-like"/>
    <property type="match status" value="1"/>
</dbReference>
<dbReference type="SUPFAM" id="SSF88697">
    <property type="entry name" value="PUA domain-like"/>
    <property type="match status" value="1"/>
</dbReference>
<dbReference type="SUPFAM" id="SSF47592">
    <property type="entry name" value="SWIB/MDM2 domain"/>
    <property type="match status" value="1"/>
</dbReference>
<dbReference type="PROSITE" id="PS50890">
    <property type="entry name" value="PUA"/>
    <property type="match status" value="1"/>
</dbReference>
<dbReference type="PROSITE" id="PS50296">
    <property type="entry name" value="SUI1"/>
    <property type="match status" value="1"/>
</dbReference>
<dbReference type="PROSITE" id="PS51925">
    <property type="entry name" value="SWIB_MDM2"/>
    <property type="match status" value="1"/>
</dbReference>
<protein>
    <recommendedName>
        <fullName>Eukaryotic translation initiation factor 2D</fullName>
        <shortName>eIF2d</shortName>
    </recommendedName>
    <alternativeName>
        <fullName>Ligatin</fullName>
    </alternativeName>
</protein>
<feature type="chain" id="PRO_0000130614" description="Eukaryotic translation initiation factor 2D">
    <location>
        <begin position="1"/>
        <end position="570"/>
    </location>
</feature>
<feature type="domain" description="PUA" evidence="4">
    <location>
        <begin position="93"/>
        <end position="173"/>
    </location>
</feature>
<feature type="domain" description="SWIB/MDM2" evidence="6">
    <location>
        <begin position="370"/>
        <end position="454"/>
    </location>
</feature>
<feature type="domain" description="SUI1" evidence="5">
    <location>
        <begin position="478"/>
        <end position="551"/>
    </location>
</feature>
<feature type="region of interest" description="Disordered" evidence="7">
    <location>
        <begin position="178"/>
        <end position="200"/>
    </location>
</feature>
<feature type="region of interest" description="Disordered" evidence="7">
    <location>
        <begin position="215"/>
        <end position="243"/>
    </location>
</feature>
<feature type="modified residue" description="N-acetylmethionine" evidence="2">
    <location>
        <position position="1"/>
    </location>
</feature>
<feature type="modified residue" description="Phosphoserine" evidence="3">
    <location>
        <position position="238"/>
    </location>
</feature>
<feature type="modified residue" description="Phosphoserine" evidence="3">
    <location>
        <position position="241"/>
    </location>
</feature>
<feature type="modified residue" description="Phosphoserine" evidence="2">
    <location>
        <position position="348"/>
    </location>
</feature>
<proteinExistence type="evidence at protein level"/>
<gene>
    <name type="primary">Eif2d</name>
    <name type="synonym">Lgtn</name>
</gene>
<sequence>MFAKAFRVKSNTAIKGSDRRKLRADVTVAFPTLGTDQVSELIPGKEELNVVKLYAHKGDAVTVYTSGGNPILFELEKNLYPTVYTLWSHPDLLPAFITWPLVLEKLVGGADLMLPGVVVPPTGLPQVQQGDLCAIALVGNRAPVAVGVAAMSTAQMLASGLKGKGISVLHTYQDHLWRSGDKSSPPAIAPLDPTDSCEEKADLGLHGNLRSLSLEGEEENGQVPNPEASDDPNSRALSQDSVDGKPLQEQMDELLEQCFLHALKSRVKKADLPLLTSTLLGSHMFSCCPEGQQLDIKKSSYKKLSKFLQHMQQEQIVQVKELSKGVESIVAVDWRHPRITSFIVPEPSLASQTVQEGSREKPYLPPDIKSLYCVPANMTQLFLESGHKKGSTLEGSEVRRIITDYAKRNNLVDADNRNLVKLDPILCDCILEKNEQHLVMKLPWDSLLTRCLKNLQPAYQVTFPGQEPIIKKGKLCPIDITLVLKTYNKKVTVVRNLETYGLDPCSVAAILQQRCQASTIVSPAPGAKDSLQVQVQGNQIHHLGQLLLEEYRLPGKYIQGLEKAPKPGKK</sequence>
<name>EIF2D_RAT</name>
<accession>Q5PPG7</accession>
<keyword id="KW-0007">Acetylation</keyword>
<keyword id="KW-0963">Cytoplasm</keyword>
<keyword id="KW-0396">Initiation factor</keyword>
<keyword id="KW-0597">Phosphoprotein</keyword>
<keyword id="KW-0648">Protein biosynthesis</keyword>
<keyword id="KW-1185">Reference proteome</keyword>
<evidence type="ECO:0000250" key="1"/>
<evidence type="ECO:0000250" key="2">
    <source>
        <dbReference type="UniProtKB" id="P41214"/>
    </source>
</evidence>
<evidence type="ECO:0000250" key="3">
    <source>
        <dbReference type="UniProtKB" id="Q61211"/>
    </source>
</evidence>
<evidence type="ECO:0000255" key="4">
    <source>
        <dbReference type="PROSITE-ProRule" id="PRU00161"/>
    </source>
</evidence>
<evidence type="ECO:0000255" key="5">
    <source>
        <dbReference type="PROSITE-ProRule" id="PRU00200"/>
    </source>
</evidence>
<evidence type="ECO:0000255" key="6">
    <source>
        <dbReference type="PROSITE-ProRule" id="PRU01273"/>
    </source>
</evidence>
<evidence type="ECO:0000256" key="7">
    <source>
        <dbReference type="SAM" id="MobiDB-lite"/>
    </source>
</evidence>
<evidence type="ECO:0000305" key="8"/>